<organism>
    <name type="scientific">Equine infectious anemia virus (isolate P3.2-5)</name>
    <name type="common">EIAV</name>
    <dbReference type="NCBI Taxonomy" id="11669"/>
    <lineage>
        <taxon>Viruses</taxon>
        <taxon>Riboviria</taxon>
        <taxon>Pararnavirae</taxon>
        <taxon>Artverviricota</taxon>
        <taxon>Revtraviricetes</taxon>
        <taxon>Ortervirales</taxon>
        <taxon>Retroviridae</taxon>
        <taxon>Orthoretrovirinae</taxon>
        <taxon>Lentivirus</taxon>
        <taxon>Equine infectious anemia virus</taxon>
    </lineage>
</organism>
<accession>P22430</accession>
<comment type="function">
    <text evidence="1">The surface protein (SU) attaches the virus to the host cell by binding to its receptor. This interaction triggers the refolding of the transmembrane protein (TM) and is thought to activate its fusogenic potential by unmasking its fusion peptide. Fusion occurs at the host cell plasma membrane (By similarity).</text>
</comment>
<comment type="function">
    <text evidence="1">The transmembrane protein (TM) acts as a class I viral fusion protein. Under the current model, the protein has at least 3 conformational states: pre-fusion native state, pre-hairpin intermediate state, and post-fusion hairpin state. During viral and target cell membrane fusion, the coiled coil regions (heptad repeats) assume a trimer-of-hairpins structure, positioning the fusion peptide in close proximity to the C-terminal region of the ectodomain. The formation of this structure appears to drive apposition and subsequent fusion of viral and target cell membranes. Membranes fusion leads to delivery of the nucleocapsid into the cytoplasm (By similarity).</text>
</comment>
<comment type="subunit">
    <text evidence="1">The mature envelope protein (Env) consists of a trimer of SU-TM heterodimers attached by noncovalent interactions or by a labile interchain disulfide bond.</text>
</comment>
<comment type="subcellular location">
    <molecule>Transmembrane protein</molecule>
    <subcellularLocation>
        <location evidence="1">Virion membrane</location>
        <topology evidence="1">Single-pass type I membrane protein</topology>
    </subcellularLocation>
    <subcellularLocation>
        <location evidence="1">Host cell membrane</location>
        <topology evidence="1">Single-pass type I membrane protein</topology>
    </subcellularLocation>
    <text evidence="1">It is probably concentrated at the site of budding and incorporated into the virions possibly by contacts between the cytoplasmic tail of Env and the N-terminus of Gag.</text>
</comment>
<comment type="subcellular location">
    <molecule>Surface protein</molecule>
    <subcellularLocation>
        <location evidence="1">Virion membrane</location>
        <topology evidence="1">Peripheral membrane protein</topology>
    </subcellularLocation>
    <subcellularLocation>
        <location evidence="1">Host cell membrane</location>
        <topology evidence="1">Peripheral membrane protein</topology>
    </subcellularLocation>
    <text evidence="1">The surface protein is not anchored to the viral envelope, but associates with the extravirion surface through its binding to TM. It is probably concentrated at the site of budding and incorporated into the virions possibly by contacts between the cytoplasmic tail of Env and the N-terminus of Gag (By similarity).</text>
</comment>
<comment type="PTM">
    <text evidence="1">Specific enzymatic cleavages in vivo yield mature proteins. Envelope glycoproteins are synthesized as an inactive precursor that is N-glycosylated and processed likely by host cell furin or by a furin-like protease in the Golgi to yield the mature SU and TM proteins. The cleavage site between SU and TM requires the minimal sequence [KR]-X-[KR]-R (By similarity).</text>
</comment>
<organismHost>
    <name type="scientific">Equus asinus</name>
    <name type="common">Donkey</name>
    <name type="synonym">Equus africanus asinus</name>
    <dbReference type="NCBI Taxonomy" id="9793"/>
</organismHost>
<organismHost>
    <name type="scientific">Equus caballus</name>
    <name type="common">Horse</name>
    <dbReference type="NCBI Taxonomy" id="9796"/>
</organismHost>
<proteinExistence type="inferred from homology"/>
<reference key="1">
    <citation type="journal article" date="1987" name="Virology">
        <title>Antigenic variation and lentivirus persistence: variations in envelope gene sequences during EIAV infection resemble changes reported for sequential isolates of HIV.</title>
        <authorList>
            <person name="Payne S.L."/>
            <person name="Fang F.D."/>
            <person name="Liu C.P."/>
            <person name="Dhruva B.R."/>
            <person name="Rwambo P."/>
            <person name="Issel C.J."/>
            <person name="Montelaro R.C."/>
        </authorList>
    </citation>
    <scope>NUCLEOTIDE SEQUENCE [GENOMIC RNA]</scope>
</reference>
<evidence type="ECO:0000250" key="1"/>
<evidence type="ECO:0000255" key="2"/>
<evidence type="ECO:0000256" key="3">
    <source>
        <dbReference type="SAM" id="MobiDB-lite"/>
    </source>
</evidence>
<sequence>MVSIAFYGGIPGGISTPITQQSEKSKCEENTIFQPYCYNNNSKNSMAESKEARDQEMNLKEESKEEKRRNDWWKIGMFLLCLAGTTGGILWWYEGLPQQHYIGLVAIGGRLNGSGQSNAIECWGSFPGCRPFQNYFSYETNRSMHMDNDTATLLEAYHREITFIYKSSCTDSDHCQEYQCKQVNLNSSDPSNSVRVEDVTNTTEYWGFKWLECNQTENFKTILVPENEMVKINDNDTWIPKGCNETWARVKRCPIDILYGIHPIRLSVQPPFFLVQEKGTADTSRIGNCGPTIFLGVLEDNKGVVRGNGTACKVSDLNINRKDYTGIYQVPIFYTCNFTNITSCNNESIISVIMYETNQVQYLLCNNNNNSNNYNCVVQSFGVIGQAHLELPRPNKRIRNQSFNQYNCSINNKTELETWKLVNTSGITPLPISSEANTGLIRHKRDFGISAIVAAIVAATAIAASATMSYVALTEVNKIMEVQNHTFEVENSTLNGMDLIEQQIKILYAMILQTHADVQLLKEKQQVEETFNLIGCIERTHVFCHTGHPWNMSWGHLNESTQWDDWVSKMEDLNQEILTTLHGARNNLAQSMITFNTPDSIAQFGKDLWSHIGNWIPGLGASIIKYIVMFLLIYLLLTSSPKILRALWKVTSGAGSSGSRYLKKKFYHKHASREDTWDQAQHNIHLAGVTGGSGNKYCKQKYSRNDWNGESEEYNRRPKSWVKSIETFGESYISEKTKGEISQPGAAINEHKNGSGGNNPHQGSLDLEIRSEGGNIYDCCIKAQEGTLAIPCCGFPLWLFWGLVIIVGRIAGYGLRGFAVIIRICIRGLNLIFEIIRKMLDYIGRALNPGTSHVSMPQYV</sequence>
<dbReference type="EMBL" id="M18388">
    <property type="protein sequence ID" value="AAA66410.1"/>
    <property type="molecule type" value="Genomic_RNA"/>
</dbReference>
<dbReference type="PIR" id="D34027">
    <property type="entry name" value="VCLJE4"/>
</dbReference>
<dbReference type="GlyCosmos" id="P22430">
    <property type="glycosylation" value="22 sites, No reported glycans"/>
</dbReference>
<dbReference type="GO" id="GO:0020002">
    <property type="term" value="C:host cell plasma membrane"/>
    <property type="evidence" value="ECO:0007669"/>
    <property type="project" value="UniProtKB-SubCell"/>
</dbReference>
<dbReference type="GO" id="GO:0016020">
    <property type="term" value="C:membrane"/>
    <property type="evidence" value="ECO:0007669"/>
    <property type="project" value="UniProtKB-KW"/>
</dbReference>
<dbReference type="GO" id="GO:0019031">
    <property type="term" value="C:viral envelope"/>
    <property type="evidence" value="ECO:0007669"/>
    <property type="project" value="UniProtKB-KW"/>
</dbReference>
<dbReference type="GO" id="GO:0055036">
    <property type="term" value="C:virion membrane"/>
    <property type="evidence" value="ECO:0007669"/>
    <property type="project" value="UniProtKB-SubCell"/>
</dbReference>
<dbReference type="GO" id="GO:0005198">
    <property type="term" value="F:structural molecule activity"/>
    <property type="evidence" value="ECO:0007669"/>
    <property type="project" value="InterPro"/>
</dbReference>
<dbReference type="GO" id="GO:0046718">
    <property type="term" value="P:symbiont entry into host cell"/>
    <property type="evidence" value="ECO:0007669"/>
    <property type="project" value="UniProtKB-KW"/>
</dbReference>
<dbReference type="GO" id="GO:0019062">
    <property type="term" value="P:virion attachment to host cell"/>
    <property type="evidence" value="ECO:0007669"/>
    <property type="project" value="UniProtKB-KW"/>
</dbReference>
<dbReference type="CDD" id="cd09909">
    <property type="entry name" value="HIV-1-like_HR1-HR2"/>
    <property type="match status" value="1"/>
</dbReference>
<dbReference type="InterPro" id="IPR000328">
    <property type="entry name" value="GP41-like"/>
</dbReference>
<dbReference type="InterPro" id="IPR001361">
    <property type="entry name" value="Gp90_EIAV"/>
</dbReference>
<dbReference type="Pfam" id="PF00971">
    <property type="entry name" value="EIAV_GP90"/>
    <property type="match status" value="1"/>
</dbReference>
<dbReference type="Pfam" id="PF00517">
    <property type="entry name" value="GP41"/>
    <property type="match status" value="1"/>
</dbReference>
<name>ENV_EIAV5</name>
<protein>
    <recommendedName>
        <fullName>Envelope glycoprotein</fullName>
    </recommendedName>
    <alternativeName>
        <fullName>Env polyprotein</fullName>
    </alternativeName>
    <component>
        <recommendedName>
            <fullName>Surface protein</fullName>
            <shortName>SU</shortName>
        </recommendedName>
        <alternativeName>
            <fullName>Glycoprotein 90</fullName>
            <shortName>gp90</shortName>
        </alternativeName>
    </component>
    <component>
        <recommendedName>
            <fullName>Transmembrane protein</fullName>
            <shortName>TM</shortName>
        </recommendedName>
        <alternativeName>
            <fullName>Glycoprotein 45</fullName>
            <shortName>gp45</shortName>
        </alternativeName>
    </component>
</protein>
<gene>
    <name type="primary">env</name>
</gene>
<keyword id="KW-0165">Cleavage on pair of basic residues</keyword>
<keyword id="KW-0175">Coiled coil</keyword>
<keyword id="KW-1015">Disulfide bond</keyword>
<keyword id="KW-0325">Glycoprotein</keyword>
<keyword id="KW-1032">Host cell membrane</keyword>
<keyword id="KW-1043">Host membrane</keyword>
<keyword id="KW-0945">Host-virus interaction</keyword>
<keyword id="KW-0472">Membrane</keyword>
<keyword id="KW-0812">Transmembrane</keyword>
<keyword id="KW-1133">Transmembrane helix</keyword>
<keyword id="KW-1161">Viral attachment to host cell</keyword>
<keyword id="KW-0261">Viral envelope protein</keyword>
<keyword id="KW-0946">Virion</keyword>
<keyword id="KW-1160">Virus entry into host cell</keyword>
<feature type="propeptide" id="PRO_0000239530" evidence="1">
    <location>
        <begin position="1"/>
        <end position="6"/>
    </location>
</feature>
<feature type="chain" id="PRO_0000038711" description="Envelope glycoprotein">
    <location>
        <begin position="7"/>
        <end position="860"/>
    </location>
</feature>
<feature type="chain" id="PRO_0000038712" description="Surface protein" evidence="1">
    <location>
        <begin position="7"/>
        <end position="445"/>
    </location>
</feature>
<feature type="chain" id="PRO_0000038713" description="Transmembrane protein" evidence="1">
    <location>
        <begin position="446"/>
        <end position="860"/>
    </location>
</feature>
<feature type="topological domain" description="Extracellular" evidence="2">
    <location>
        <begin position="7"/>
        <end position="614"/>
    </location>
</feature>
<feature type="transmembrane region" description="Helical" evidence="2">
    <location>
        <begin position="615"/>
        <end position="635"/>
    </location>
</feature>
<feature type="topological domain" description="Cytoplasmic" evidence="2">
    <location>
        <begin position="636"/>
        <end position="860"/>
    </location>
</feature>
<feature type="region of interest" description="Fusion peptide" evidence="2">
    <location>
        <begin position="447"/>
        <end position="467"/>
    </location>
</feature>
<feature type="region of interest" description="Immunosuppression" evidence="1">
    <location>
        <begin position="499"/>
        <end position="514"/>
    </location>
</feature>
<feature type="region of interest" description="Disordered" evidence="3">
    <location>
        <begin position="746"/>
        <end position="765"/>
    </location>
</feature>
<feature type="coiled-coil region" evidence="2">
    <location>
        <begin position="577"/>
        <end position="625"/>
    </location>
</feature>
<feature type="coiled-coil region" evidence="2">
    <location>
        <begin position="664"/>
        <end position="700"/>
    </location>
</feature>
<feature type="site" description="Cleavage; by host" evidence="1">
    <location>
        <begin position="445"/>
        <end position="446"/>
    </location>
</feature>
<feature type="site" description="Cleavage" evidence="1">
    <location>
        <begin position="685"/>
        <end position="686"/>
    </location>
</feature>
<feature type="glycosylation site" description="N-linked (GlcNAc...) asparagine; by host" evidence="2">
    <location>
        <position position="40"/>
    </location>
</feature>
<feature type="glycosylation site" description="N-linked (GlcNAc...) asparagine; by host" evidence="2">
    <location>
        <position position="112"/>
    </location>
</feature>
<feature type="glycosylation site" description="N-linked (GlcNAc...) asparagine; by host" evidence="2">
    <location>
        <position position="141"/>
    </location>
</feature>
<feature type="glycosylation site" description="N-linked (GlcNAc...) asparagine; by host" evidence="2">
    <location>
        <position position="148"/>
    </location>
</feature>
<feature type="glycosylation site" description="N-linked (GlcNAc...) asparagine; by host" evidence="2">
    <location>
        <position position="186"/>
    </location>
</feature>
<feature type="glycosylation site" description="N-linked (GlcNAc...) asparagine; by host" evidence="2">
    <location>
        <position position="201"/>
    </location>
</feature>
<feature type="glycosylation site" description="N-linked (GlcNAc...) asparagine; by host" evidence="2">
    <location>
        <position position="214"/>
    </location>
</feature>
<feature type="glycosylation site" description="N-linked (GlcNAc...) asparagine; by host" evidence="2">
    <location>
        <position position="235"/>
    </location>
</feature>
<feature type="glycosylation site" description="N-linked (GlcNAc...) asparagine; by host" evidence="2">
    <location>
        <position position="244"/>
    </location>
</feature>
<feature type="glycosylation site" description="N-linked (GlcNAc...) asparagine; by host" evidence="2">
    <location>
        <position position="308"/>
    </location>
</feature>
<feature type="glycosylation site" description="N-linked (GlcNAc...) asparagine; by host" evidence="2">
    <location>
        <position position="337"/>
    </location>
</feature>
<feature type="glycosylation site" description="N-linked (GlcNAc...) asparagine; by host" evidence="2">
    <location>
        <position position="340"/>
    </location>
</feature>
<feature type="glycosylation site" description="N-linked (GlcNAc...) asparagine; by host" evidence="2">
    <location>
        <position position="346"/>
    </location>
</feature>
<feature type="glycosylation site" description="N-linked (GlcNAc...) asparagine; by host" evidence="2">
    <location>
        <position position="369"/>
    </location>
</feature>
<feature type="glycosylation site" description="N-linked (GlcNAc...) asparagine; by host" evidence="2">
    <location>
        <position position="400"/>
    </location>
</feature>
<feature type="glycosylation site" description="N-linked (GlcNAc...) asparagine; by host" evidence="2">
    <location>
        <position position="407"/>
    </location>
</feature>
<feature type="glycosylation site" description="N-linked (GlcNAc...) asparagine; by host" evidence="2">
    <location>
        <position position="412"/>
    </location>
</feature>
<feature type="glycosylation site" description="N-linked (GlcNAc...) asparagine; by host" evidence="2">
    <location>
        <position position="423"/>
    </location>
</feature>
<feature type="glycosylation site" description="N-linked (GlcNAc...) asparagine; by host" evidence="2">
    <location>
        <position position="484"/>
    </location>
</feature>
<feature type="glycosylation site" description="N-linked (GlcNAc...) asparagine; by host" evidence="2">
    <location>
        <position position="491"/>
    </location>
</feature>
<feature type="glycosylation site" description="N-linked (GlcNAc...) asparagine; by host" evidence="2">
    <location>
        <position position="551"/>
    </location>
</feature>
<feature type="glycosylation site" description="N-linked (GlcNAc...) asparagine; by host" evidence="2">
    <location>
        <position position="558"/>
    </location>
</feature>